<accession>C6ADP9</accession>
<evidence type="ECO:0000255" key="1">
    <source>
        <dbReference type="HAMAP-Rule" id="MF_01456"/>
    </source>
</evidence>
<proteinExistence type="inferred from homology"/>
<name>NUOK_BARGA</name>
<organism>
    <name type="scientific">Bartonella grahamii (strain as4aup)</name>
    <dbReference type="NCBI Taxonomy" id="634504"/>
    <lineage>
        <taxon>Bacteria</taxon>
        <taxon>Pseudomonadati</taxon>
        <taxon>Pseudomonadota</taxon>
        <taxon>Alphaproteobacteria</taxon>
        <taxon>Hyphomicrobiales</taxon>
        <taxon>Bartonellaceae</taxon>
        <taxon>Bartonella</taxon>
    </lineage>
</organism>
<gene>
    <name evidence="1" type="primary">nuoK</name>
    <name type="ordered locus">Bgr_10420</name>
</gene>
<reference key="1">
    <citation type="journal article" date="2009" name="PLoS Genet.">
        <title>Run-off replication of host-adaptability genes is associated with gene transfer agents in the genome of mouse-infecting Bartonella grahamii.</title>
        <authorList>
            <person name="Berglund E.C."/>
            <person name="Frank A.C."/>
            <person name="Calteau A."/>
            <person name="Vinnere Pettersson O."/>
            <person name="Granberg F."/>
            <person name="Eriksson A.-S."/>
            <person name="Naeslund K."/>
            <person name="Holmberg M."/>
            <person name="Lindroos H."/>
            <person name="Andersson S.G."/>
        </authorList>
    </citation>
    <scope>NUCLEOTIDE SEQUENCE [LARGE SCALE GENOMIC DNA]</scope>
    <source>
        <strain>as4aup</strain>
    </source>
</reference>
<sequence>MYIDITHYLTVSALMFTIGIAGIFLNRKNVIIILMSIELILLSVNLNFVAFSAFLHDLVGQIFALFVLTVAAAEAAIGLAILVVFFRNRGSIAVEDVNVMKG</sequence>
<comment type="function">
    <text evidence="1">NDH-1 shuttles electrons from NADH, via FMN and iron-sulfur (Fe-S) centers, to quinones in the respiratory chain. The immediate electron acceptor for the enzyme in this species is believed to be ubiquinone. Couples the redox reaction to proton translocation (for every two electrons transferred, four hydrogen ions are translocated across the cytoplasmic membrane), and thus conserves the redox energy in a proton gradient.</text>
</comment>
<comment type="catalytic activity">
    <reaction evidence="1">
        <text>a quinone + NADH + 5 H(+)(in) = a quinol + NAD(+) + 4 H(+)(out)</text>
        <dbReference type="Rhea" id="RHEA:57888"/>
        <dbReference type="ChEBI" id="CHEBI:15378"/>
        <dbReference type="ChEBI" id="CHEBI:24646"/>
        <dbReference type="ChEBI" id="CHEBI:57540"/>
        <dbReference type="ChEBI" id="CHEBI:57945"/>
        <dbReference type="ChEBI" id="CHEBI:132124"/>
    </reaction>
</comment>
<comment type="subunit">
    <text evidence="1">NDH-1 is composed of 14 different subunits. Subunits NuoA, H, J, K, L, M, N constitute the membrane sector of the complex.</text>
</comment>
<comment type="subcellular location">
    <subcellularLocation>
        <location evidence="1">Cell inner membrane</location>
        <topology evidence="1">Multi-pass membrane protein</topology>
    </subcellularLocation>
</comment>
<comment type="similarity">
    <text evidence="1">Belongs to the complex I subunit 4L family.</text>
</comment>
<protein>
    <recommendedName>
        <fullName evidence="1">NADH-quinone oxidoreductase subunit K</fullName>
        <ecNumber evidence="1">7.1.1.-</ecNumber>
    </recommendedName>
    <alternativeName>
        <fullName evidence="1">NADH dehydrogenase I subunit K</fullName>
    </alternativeName>
    <alternativeName>
        <fullName evidence="1">NDH-1 subunit K</fullName>
    </alternativeName>
</protein>
<dbReference type="EC" id="7.1.1.-" evidence="1"/>
<dbReference type="EMBL" id="CP001562">
    <property type="protein sequence ID" value="ACS51304.1"/>
    <property type="molecule type" value="Genomic_DNA"/>
</dbReference>
<dbReference type="RefSeq" id="WP_015856359.1">
    <property type="nucleotide sequence ID" value="NC_012846.1"/>
</dbReference>
<dbReference type="SMR" id="C6ADP9"/>
<dbReference type="STRING" id="634504.Bgr_10420"/>
<dbReference type="KEGG" id="bgr:Bgr_10420"/>
<dbReference type="eggNOG" id="COG0713">
    <property type="taxonomic scope" value="Bacteria"/>
</dbReference>
<dbReference type="HOGENOM" id="CLU_144724_2_0_5"/>
<dbReference type="OrthoDB" id="9811124at2"/>
<dbReference type="Proteomes" id="UP000001489">
    <property type="component" value="Chromosome"/>
</dbReference>
<dbReference type="GO" id="GO:0030964">
    <property type="term" value="C:NADH dehydrogenase complex"/>
    <property type="evidence" value="ECO:0007669"/>
    <property type="project" value="TreeGrafter"/>
</dbReference>
<dbReference type="GO" id="GO:0005886">
    <property type="term" value="C:plasma membrane"/>
    <property type="evidence" value="ECO:0007669"/>
    <property type="project" value="UniProtKB-SubCell"/>
</dbReference>
<dbReference type="GO" id="GO:0050136">
    <property type="term" value="F:NADH:ubiquinone reductase (non-electrogenic) activity"/>
    <property type="evidence" value="ECO:0007669"/>
    <property type="project" value="UniProtKB-UniRule"/>
</dbReference>
<dbReference type="GO" id="GO:0048038">
    <property type="term" value="F:quinone binding"/>
    <property type="evidence" value="ECO:0007669"/>
    <property type="project" value="UniProtKB-KW"/>
</dbReference>
<dbReference type="GO" id="GO:0042773">
    <property type="term" value="P:ATP synthesis coupled electron transport"/>
    <property type="evidence" value="ECO:0007669"/>
    <property type="project" value="InterPro"/>
</dbReference>
<dbReference type="FunFam" id="1.10.287.3510:FF:000001">
    <property type="entry name" value="NADH-quinone oxidoreductase subunit K"/>
    <property type="match status" value="1"/>
</dbReference>
<dbReference type="Gene3D" id="1.10.287.3510">
    <property type="match status" value="1"/>
</dbReference>
<dbReference type="HAMAP" id="MF_01456">
    <property type="entry name" value="NDH1_NuoK"/>
    <property type="match status" value="1"/>
</dbReference>
<dbReference type="InterPro" id="IPR001133">
    <property type="entry name" value="NADH_UbQ_OxRdtase_chain4L/K"/>
</dbReference>
<dbReference type="InterPro" id="IPR039428">
    <property type="entry name" value="NUOK/Mnh_C1-like"/>
</dbReference>
<dbReference type="NCBIfam" id="NF004320">
    <property type="entry name" value="PRK05715.1-2"/>
    <property type="match status" value="1"/>
</dbReference>
<dbReference type="NCBIfam" id="NF004321">
    <property type="entry name" value="PRK05715.1-3"/>
    <property type="match status" value="1"/>
</dbReference>
<dbReference type="NCBIfam" id="NF004323">
    <property type="entry name" value="PRK05715.1-5"/>
    <property type="match status" value="1"/>
</dbReference>
<dbReference type="PANTHER" id="PTHR11434:SF21">
    <property type="entry name" value="NADH DEHYDROGENASE SUBUNIT 4L-RELATED"/>
    <property type="match status" value="1"/>
</dbReference>
<dbReference type="PANTHER" id="PTHR11434">
    <property type="entry name" value="NADH-UBIQUINONE OXIDOREDUCTASE SUBUNIT ND4L"/>
    <property type="match status" value="1"/>
</dbReference>
<dbReference type="Pfam" id="PF00420">
    <property type="entry name" value="Oxidored_q2"/>
    <property type="match status" value="1"/>
</dbReference>
<keyword id="KW-0997">Cell inner membrane</keyword>
<keyword id="KW-1003">Cell membrane</keyword>
<keyword id="KW-0472">Membrane</keyword>
<keyword id="KW-0520">NAD</keyword>
<keyword id="KW-0874">Quinone</keyword>
<keyword id="KW-1278">Translocase</keyword>
<keyword id="KW-0812">Transmembrane</keyword>
<keyword id="KW-1133">Transmembrane helix</keyword>
<keyword id="KW-0813">Transport</keyword>
<keyword id="KW-0830">Ubiquinone</keyword>
<feature type="chain" id="PRO_0000389952" description="NADH-quinone oxidoreductase subunit K">
    <location>
        <begin position="1"/>
        <end position="102"/>
    </location>
</feature>
<feature type="transmembrane region" description="Helical" evidence="1">
    <location>
        <begin position="5"/>
        <end position="25"/>
    </location>
</feature>
<feature type="transmembrane region" description="Helical" evidence="1">
    <location>
        <begin position="31"/>
        <end position="51"/>
    </location>
</feature>
<feature type="transmembrane region" description="Helical" evidence="1">
    <location>
        <begin position="66"/>
        <end position="86"/>
    </location>
</feature>